<feature type="chain" id="PRO_0000161881" description="tRNA/tmRNA (uracil-C(5))-methyltransferase">
    <location>
        <begin position="1"/>
        <end position="369"/>
    </location>
</feature>
<feature type="active site" description="Nucleophile" evidence="1">
    <location>
        <position position="326"/>
    </location>
</feature>
<feature type="active site" description="Proton acceptor" evidence="1">
    <location>
        <position position="360"/>
    </location>
</feature>
<feature type="binding site" evidence="1">
    <location>
        <position position="190"/>
    </location>
    <ligand>
        <name>S-adenosyl-L-methionine</name>
        <dbReference type="ChEBI" id="CHEBI:59789"/>
    </ligand>
</feature>
<feature type="binding site" evidence="1">
    <location>
        <position position="218"/>
    </location>
    <ligand>
        <name>S-adenosyl-L-methionine</name>
        <dbReference type="ChEBI" id="CHEBI:59789"/>
    </ligand>
</feature>
<feature type="binding site" evidence="1">
    <location>
        <position position="223"/>
    </location>
    <ligand>
        <name>S-adenosyl-L-methionine</name>
        <dbReference type="ChEBI" id="CHEBI:59789"/>
    </ligand>
</feature>
<feature type="binding site" evidence="1">
    <location>
        <position position="239"/>
    </location>
    <ligand>
        <name>S-adenosyl-L-methionine</name>
        <dbReference type="ChEBI" id="CHEBI:59789"/>
    </ligand>
</feature>
<feature type="binding site" evidence="1">
    <location>
        <position position="301"/>
    </location>
    <ligand>
        <name>S-adenosyl-L-methionine</name>
        <dbReference type="ChEBI" id="CHEBI:59789"/>
    </ligand>
</feature>
<keyword id="KW-0489">Methyltransferase</keyword>
<keyword id="KW-0949">S-adenosyl-L-methionine</keyword>
<keyword id="KW-0808">Transferase</keyword>
<keyword id="KW-0819">tRNA processing</keyword>
<name>TRMA_VIBPA</name>
<organism>
    <name type="scientific">Vibrio parahaemolyticus serotype O3:K6 (strain RIMD 2210633)</name>
    <dbReference type="NCBI Taxonomy" id="223926"/>
    <lineage>
        <taxon>Bacteria</taxon>
        <taxon>Pseudomonadati</taxon>
        <taxon>Pseudomonadota</taxon>
        <taxon>Gammaproteobacteria</taxon>
        <taxon>Vibrionales</taxon>
        <taxon>Vibrionaceae</taxon>
        <taxon>Vibrio</taxon>
    </lineage>
</organism>
<dbReference type="EC" id="2.1.1.-" evidence="1"/>
<dbReference type="EC" id="2.1.1.35" evidence="1"/>
<dbReference type="EMBL" id="BA000031">
    <property type="protein sequence ID" value="BAC61202.1"/>
    <property type="molecule type" value="Genomic_DNA"/>
</dbReference>
<dbReference type="RefSeq" id="NP_799318.1">
    <property type="nucleotide sequence ID" value="NC_004603.1"/>
</dbReference>
<dbReference type="RefSeq" id="WP_005480873.1">
    <property type="nucleotide sequence ID" value="NC_004603.1"/>
</dbReference>
<dbReference type="SMR" id="Q87KN8"/>
<dbReference type="GeneID" id="1190525"/>
<dbReference type="KEGG" id="vpa:VP2939"/>
<dbReference type="PATRIC" id="fig|223926.6.peg.2829"/>
<dbReference type="eggNOG" id="COG2265">
    <property type="taxonomic scope" value="Bacteria"/>
</dbReference>
<dbReference type="HOGENOM" id="CLU_043022_0_0_6"/>
<dbReference type="Proteomes" id="UP000002493">
    <property type="component" value="Chromosome 1"/>
</dbReference>
<dbReference type="GO" id="GO:0005829">
    <property type="term" value="C:cytosol"/>
    <property type="evidence" value="ECO:0007669"/>
    <property type="project" value="TreeGrafter"/>
</dbReference>
<dbReference type="GO" id="GO:0019843">
    <property type="term" value="F:rRNA binding"/>
    <property type="evidence" value="ECO:0007669"/>
    <property type="project" value="TreeGrafter"/>
</dbReference>
<dbReference type="GO" id="GO:0030697">
    <property type="term" value="F:tRNA (uracil(54)-C5)-methyltransferase activity, S-adenosyl methionine-dependent"/>
    <property type="evidence" value="ECO:0007669"/>
    <property type="project" value="UniProtKB-UniRule"/>
</dbReference>
<dbReference type="GO" id="GO:0000049">
    <property type="term" value="F:tRNA binding"/>
    <property type="evidence" value="ECO:0007669"/>
    <property type="project" value="TreeGrafter"/>
</dbReference>
<dbReference type="GO" id="GO:0030488">
    <property type="term" value="P:tRNA methylation"/>
    <property type="evidence" value="ECO:0007669"/>
    <property type="project" value="UniProtKB-UniRule"/>
</dbReference>
<dbReference type="CDD" id="cd02440">
    <property type="entry name" value="AdoMet_MTases"/>
    <property type="match status" value="1"/>
</dbReference>
<dbReference type="FunFam" id="2.40.50.1070:FF:000001">
    <property type="entry name" value="tRNA/tmRNA (uracil-C(5))-methyltransferase"/>
    <property type="match status" value="1"/>
</dbReference>
<dbReference type="FunFam" id="3.40.50.150:FF:000012">
    <property type="entry name" value="tRNA/tmRNA (uracil-C(5))-methyltransferase"/>
    <property type="match status" value="1"/>
</dbReference>
<dbReference type="Gene3D" id="2.40.50.1070">
    <property type="match status" value="1"/>
</dbReference>
<dbReference type="Gene3D" id="3.40.50.150">
    <property type="entry name" value="Vaccinia Virus protein VP39"/>
    <property type="match status" value="1"/>
</dbReference>
<dbReference type="HAMAP" id="MF_01011">
    <property type="entry name" value="RNA_methyltr_TrmA"/>
    <property type="match status" value="1"/>
</dbReference>
<dbReference type="InterPro" id="IPR030390">
    <property type="entry name" value="MeTrfase_TrmA_AS"/>
</dbReference>
<dbReference type="InterPro" id="IPR030391">
    <property type="entry name" value="MeTrfase_TrmA_CS"/>
</dbReference>
<dbReference type="InterPro" id="IPR029063">
    <property type="entry name" value="SAM-dependent_MTases_sf"/>
</dbReference>
<dbReference type="InterPro" id="IPR011869">
    <property type="entry name" value="TrmA_MeTrfase"/>
</dbReference>
<dbReference type="InterPro" id="IPR010280">
    <property type="entry name" value="U5_MeTrfase_fam"/>
</dbReference>
<dbReference type="NCBIfam" id="TIGR02143">
    <property type="entry name" value="trmA_only"/>
    <property type="match status" value="1"/>
</dbReference>
<dbReference type="PANTHER" id="PTHR47790">
    <property type="entry name" value="TRNA/TMRNA (URACIL-C(5))-METHYLTRANSFERASE"/>
    <property type="match status" value="1"/>
</dbReference>
<dbReference type="PANTHER" id="PTHR47790:SF2">
    <property type="entry name" value="TRNA_TMRNA (URACIL-C(5))-METHYLTRANSFERASE"/>
    <property type="match status" value="1"/>
</dbReference>
<dbReference type="Pfam" id="PF05958">
    <property type="entry name" value="tRNA_U5-meth_tr"/>
    <property type="match status" value="1"/>
</dbReference>
<dbReference type="SUPFAM" id="SSF53335">
    <property type="entry name" value="S-adenosyl-L-methionine-dependent methyltransferases"/>
    <property type="match status" value="1"/>
</dbReference>
<dbReference type="PROSITE" id="PS51687">
    <property type="entry name" value="SAM_MT_RNA_M5U"/>
    <property type="match status" value="1"/>
</dbReference>
<dbReference type="PROSITE" id="PS01230">
    <property type="entry name" value="TRMA_1"/>
    <property type="match status" value="1"/>
</dbReference>
<dbReference type="PROSITE" id="PS01231">
    <property type="entry name" value="TRMA_2"/>
    <property type="match status" value="1"/>
</dbReference>
<comment type="function">
    <text evidence="1">Dual-specificity methyltransferase that catalyzes the formation of 5-methyluridine at position 54 (m5U54) in all tRNAs, and that of position 341 (m5U341) in tmRNA (transfer-mRNA).</text>
</comment>
<comment type="catalytic activity">
    <reaction evidence="1">
        <text>uridine(54) in tRNA + S-adenosyl-L-methionine = 5-methyluridine(54) in tRNA + S-adenosyl-L-homocysteine + H(+)</text>
        <dbReference type="Rhea" id="RHEA:42712"/>
        <dbReference type="Rhea" id="RHEA-COMP:10167"/>
        <dbReference type="Rhea" id="RHEA-COMP:10193"/>
        <dbReference type="ChEBI" id="CHEBI:15378"/>
        <dbReference type="ChEBI" id="CHEBI:57856"/>
        <dbReference type="ChEBI" id="CHEBI:59789"/>
        <dbReference type="ChEBI" id="CHEBI:65315"/>
        <dbReference type="ChEBI" id="CHEBI:74447"/>
        <dbReference type="EC" id="2.1.1.35"/>
    </reaction>
</comment>
<comment type="catalytic activity">
    <reaction evidence="1">
        <text>uridine(341) in tmRNA + S-adenosyl-L-methionine = 5-methyluridine(341) in tmRNA + S-adenosyl-L-homocysteine + H(+)</text>
        <dbReference type="Rhea" id="RHEA:43612"/>
        <dbReference type="Rhea" id="RHEA-COMP:10630"/>
        <dbReference type="Rhea" id="RHEA-COMP:10631"/>
        <dbReference type="ChEBI" id="CHEBI:15378"/>
        <dbReference type="ChEBI" id="CHEBI:57856"/>
        <dbReference type="ChEBI" id="CHEBI:59789"/>
        <dbReference type="ChEBI" id="CHEBI:65315"/>
        <dbReference type="ChEBI" id="CHEBI:74447"/>
    </reaction>
</comment>
<comment type="similarity">
    <text evidence="1">Belongs to the class I-like SAM-binding methyltransferase superfamily. RNA M5U methyltransferase family. TrmA subfamily.</text>
</comment>
<evidence type="ECO:0000255" key="1">
    <source>
        <dbReference type="HAMAP-Rule" id="MF_01011"/>
    </source>
</evidence>
<protein>
    <recommendedName>
        <fullName evidence="1">tRNA/tmRNA (uracil-C(5))-methyltransferase</fullName>
        <ecNumber evidence="1">2.1.1.-</ecNumber>
        <ecNumber evidence="1">2.1.1.35</ecNumber>
    </recommendedName>
    <alternativeName>
        <fullName evidence="1">tRNA (uracil(54)-C(5))-methyltransferase</fullName>
    </alternativeName>
    <alternativeName>
        <fullName evidence="1">tRNA(m5U54)-methyltransferase</fullName>
        <shortName evidence="1">RUMT</shortName>
    </alternativeName>
    <alternativeName>
        <fullName evidence="1">tmRNA (uracil(341)-C(5))-methyltransferase</fullName>
    </alternativeName>
</protein>
<accession>Q87KN8</accession>
<reference key="1">
    <citation type="journal article" date="2003" name="Lancet">
        <title>Genome sequence of Vibrio parahaemolyticus: a pathogenic mechanism distinct from that of V. cholerae.</title>
        <authorList>
            <person name="Makino K."/>
            <person name="Oshima K."/>
            <person name="Kurokawa K."/>
            <person name="Yokoyama K."/>
            <person name="Uda T."/>
            <person name="Tagomori K."/>
            <person name="Iijima Y."/>
            <person name="Najima M."/>
            <person name="Nakano M."/>
            <person name="Yamashita A."/>
            <person name="Kubota Y."/>
            <person name="Kimura S."/>
            <person name="Yasunaga T."/>
            <person name="Honda T."/>
            <person name="Shinagawa H."/>
            <person name="Hattori M."/>
            <person name="Iida T."/>
        </authorList>
    </citation>
    <scope>NUCLEOTIDE SEQUENCE [LARGE SCALE GENOMIC DNA]</scope>
    <source>
        <strain>RIMD 2210633</strain>
    </source>
</reference>
<proteinExistence type="inferred from homology"/>
<sequence length="369" mass="43043">MATLDVNPQRYQEQLAEKVERLTDMFAPYNVPELEVFESPEQHYRMRAEFRVWHEGEDLYYIMFNQETREKYRVDQFPAASRLINDLMPLLVEAMKDNESLRRKLFQVDFLSTLSGEILVSLLYHRQLDEEWIENAKALKQRLNDEGFNLNIIGRARKMKIILDRDYVIEKLDVNGQSYIYQQVENSFTQPNGKVAEKMLEWAVDCTQESTGDLLELYCGNGNFSLALAQNFDRVLATELAKPSVESAQYNIAANKIDNVQIIRMSAEEFTEAMEGKREFRRLKDNGVDLKSYNCNTIFVDPPRAGMDVDTCKMVQGYERIMYISCNPETLKENLDILSETHNVTRFALFDQFPYTHHMEAGVLLERKA</sequence>
<gene>
    <name evidence="1" type="primary">trmA</name>
    <name type="ordered locus">VP2939</name>
</gene>